<feature type="transit peptide" description="Mitochondrion" evidence="3">
    <location>
        <begin position="1"/>
        <end position="48"/>
    </location>
</feature>
<feature type="chain" id="PRO_0000415321" description="Iron-sulfur cluster assembly protein 2">
    <location>
        <begin position="49"/>
        <end position="163"/>
    </location>
</feature>
<dbReference type="EMBL" id="AJ866968">
    <property type="protein sequence ID" value="CAI29444.1"/>
    <property type="status" value="ALT_INIT"/>
    <property type="molecule type" value="mRNA"/>
</dbReference>
<dbReference type="EMBL" id="AC008261">
    <property type="protein sequence ID" value="AAF26172.1"/>
    <property type="molecule type" value="Genomic_DNA"/>
</dbReference>
<dbReference type="EMBL" id="CP002686">
    <property type="protein sequence ID" value="AEE73596.1"/>
    <property type="molecule type" value="Genomic_DNA"/>
</dbReference>
<dbReference type="EMBL" id="DQ056583">
    <property type="protein sequence ID" value="AAY78732.1"/>
    <property type="molecule type" value="mRNA"/>
</dbReference>
<dbReference type="RefSeq" id="NP_186751.1">
    <property type="nucleotide sequence ID" value="NM_110967.3"/>
</dbReference>
<dbReference type="SMR" id="Q9MAB6"/>
<dbReference type="FunCoup" id="Q9MAB6">
    <property type="interactions" value="2706"/>
</dbReference>
<dbReference type="STRING" id="3702.Q9MAB6"/>
<dbReference type="PaxDb" id="3702-AT3G01020.1"/>
<dbReference type="ProteomicsDB" id="238954"/>
<dbReference type="EnsemblPlants" id="AT3G01020.1">
    <property type="protein sequence ID" value="AT3G01020.1"/>
    <property type="gene ID" value="AT3G01020"/>
</dbReference>
<dbReference type="GeneID" id="821316"/>
<dbReference type="Gramene" id="AT3G01020.1">
    <property type="protein sequence ID" value="AT3G01020.1"/>
    <property type="gene ID" value="AT3G01020"/>
</dbReference>
<dbReference type="KEGG" id="ath:AT3G01020"/>
<dbReference type="Araport" id="AT3G01020"/>
<dbReference type="TAIR" id="AT3G01020">
    <property type="gene designation" value="ISU2"/>
</dbReference>
<dbReference type="eggNOG" id="KOG3361">
    <property type="taxonomic scope" value="Eukaryota"/>
</dbReference>
<dbReference type="HOGENOM" id="CLU_079283_5_0_1"/>
<dbReference type="InParanoid" id="Q9MAB6"/>
<dbReference type="OMA" id="RGYHEKD"/>
<dbReference type="PhylomeDB" id="Q9MAB6"/>
<dbReference type="UniPathway" id="UPA00266"/>
<dbReference type="PRO" id="PR:Q9MAB6"/>
<dbReference type="Proteomes" id="UP000006548">
    <property type="component" value="Chromosome 3"/>
</dbReference>
<dbReference type="ExpressionAtlas" id="Q9MAB6">
    <property type="expression patterns" value="baseline and differential"/>
</dbReference>
<dbReference type="GO" id="GO:0005829">
    <property type="term" value="C:cytosol"/>
    <property type="evidence" value="ECO:0007005"/>
    <property type="project" value="TAIR"/>
</dbReference>
<dbReference type="GO" id="GO:0005759">
    <property type="term" value="C:mitochondrial matrix"/>
    <property type="evidence" value="ECO:0007669"/>
    <property type="project" value="UniProtKB-SubCell"/>
</dbReference>
<dbReference type="GO" id="GO:0005739">
    <property type="term" value="C:mitochondrion"/>
    <property type="evidence" value="ECO:0000314"/>
    <property type="project" value="TAIR"/>
</dbReference>
<dbReference type="GO" id="GO:0051537">
    <property type="term" value="F:2 iron, 2 sulfur cluster binding"/>
    <property type="evidence" value="ECO:0007669"/>
    <property type="project" value="UniProtKB-KW"/>
</dbReference>
<dbReference type="GO" id="GO:0005506">
    <property type="term" value="F:iron ion binding"/>
    <property type="evidence" value="ECO:0007669"/>
    <property type="project" value="InterPro"/>
</dbReference>
<dbReference type="GO" id="GO:0005198">
    <property type="term" value="F:structural molecule activity"/>
    <property type="evidence" value="ECO:0000250"/>
    <property type="project" value="TAIR"/>
</dbReference>
<dbReference type="GO" id="GO:0016226">
    <property type="term" value="P:iron-sulfur cluster assembly"/>
    <property type="evidence" value="ECO:0007669"/>
    <property type="project" value="InterPro"/>
</dbReference>
<dbReference type="CDD" id="cd06664">
    <property type="entry name" value="IscU_like"/>
    <property type="match status" value="1"/>
</dbReference>
<dbReference type="FunFam" id="3.90.1010.10:FF:000008">
    <property type="entry name" value="Iron-sulfur cluster assembly enzyme"/>
    <property type="match status" value="1"/>
</dbReference>
<dbReference type="Gene3D" id="3.90.1010.10">
    <property type="match status" value="1"/>
</dbReference>
<dbReference type="InterPro" id="IPR011339">
    <property type="entry name" value="ISCU"/>
</dbReference>
<dbReference type="InterPro" id="IPR002871">
    <property type="entry name" value="NIF_FeS_clus_asmbl_NifU_N"/>
</dbReference>
<dbReference type="NCBIfam" id="TIGR01999">
    <property type="entry name" value="iscU"/>
    <property type="match status" value="1"/>
</dbReference>
<dbReference type="PANTHER" id="PTHR10093">
    <property type="entry name" value="IRON-SULFUR CLUSTER ASSEMBLY ENZYME NIFU HOMOLOG"/>
    <property type="match status" value="1"/>
</dbReference>
<dbReference type="Pfam" id="PF01592">
    <property type="entry name" value="NifU_N"/>
    <property type="match status" value="1"/>
</dbReference>
<dbReference type="SUPFAM" id="SSF82649">
    <property type="entry name" value="SufE/NifU"/>
    <property type="match status" value="1"/>
</dbReference>
<accession>Q9MAB6</accession>
<accession>Q2WEB4</accession>
<evidence type="ECO:0000250" key="1">
    <source>
        <dbReference type="UniProtKB" id="O49627"/>
    </source>
</evidence>
<evidence type="ECO:0000250" key="2">
    <source>
        <dbReference type="UniProtKB" id="Q03020"/>
    </source>
</evidence>
<evidence type="ECO:0000255" key="3"/>
<evidence type="ECO:0000269" key="4">
    <source>
    </source>
</evidence>
<evidence type="ECO:0000269" key="5">
    <source>
    </source>
</evidence>
<evidence type="ECO:0000305" key="6"/>
<keyword id="KW-0001">2Fe-2S</keyword>
<keyword id="KW-0408">Iron</keyword>
<keyword id="KW-0411">Iron-sulfur</keyword>
<keyword id="KW-0479">Metal-binding</keyword>
<keyword id="KW-0496">Mitochondrion</keyword>
<keyword id="KW-1185">Reference proteome</keyword>
<keyword id="KW-0809">Transit peptide</keyword>
<comment type="function">
    <text evidence="2 5">Scaffold protein for the de novo synthesis of iron-sulfur (Fe-S) clusters within mitochondria, which is required for maturation of both mitochondrial and cytoplasmic [2Fe-2S] and [4Fe-4S] proteins (PubMed:17417719). First, a [2Fe-2S] cluster is transiently assembled on the scaffold protein ISCU (ISU1, ISU2 or ISU3). In a second step, the cluster is released from ISCU, transferred to a glutaredoxin, followed by the formation of mitochondrial [2Fe-2S] proteins, the synthesis of [4Fe-4S] clusters and their target-specific insertion into the recipient apoproteins. Cluster assembly on ISCU depends on the function of the cysteine desulfurase complex NFS1-ISD11, which serves as the sulfur donor for cluster synthesis, the iron-binding protein frataxin as the putative iron donor, and the electron transfer chain comprised of ferredoxin reductase and ferredoxin, which receive their electrons from NADH (By similarity).</text>
</comment>
<comment type="cofactor">
    <cofactor evidence="1">
        <name>[2Fe-2S] cluster</name>
        <dbReference type="ChEBI" id="CHEBI:190135"/>
    </cofactor>
    <text evidence="1">Binds 1 [2Fe-2S] cluster per subunit.</text>
</comment>
<comment type="pathway">
    <text evidence="2">Cofactor biosynthesis; iron-sulfur cluster biosynthesis.</text>
</comment>
<comment type="subunit">
    <text evidence="2">Component of the core Fe-S cluster (ISC) assembly machinery.</text>
</comment>
<comment type="subcellular location">
    <subcellularLocation>
        <location evidence="4 5">Mitochondrion matrix</location>
    </subcellularLocation>
</comment>
<comment type="tissue specificity">
    <text evidence="4 5">Mostly expressed in leaves, pollen and flowers.</text>
</comment>
<comment type="similarity">
    <text evidence="6">Belongs to the NifU family.</text>
</comment>
<comment type="sequence caution" evidence="6">
    <conflict type="erroneous initiation">
        <sequence resource="EMBL-CDS" id="CAI29444"/>
    </conflict>
    <text>Truncated N-terminus.</text>
</comment>
<reference key="1">
    <citation type="journal article" date="2005" name="FEBS Lett.">
        <title>Mitochondrial localization of Arabidopsis thaliana Isu Fe-S scaffold proteins.</title>
        <authorList>
            <person name="Leon S."/>
            <person name="Touraine B."/>
            <person name="Briat J.-F."/>
            <person name="Lobreaux S."/>
        </authorList>
    </citation>
    <scope>NUCLEOTIDE SEQUENCE [MRNA]</scope>
    <scope>SUBCELLULAR LOCATION</scope>
    <scope>TISSUE SPECIFICITY</scope>
    <scope>GENE FAMILY</scope>
    <scope>NOMENCLATURE</scope>
    <source>
        <strain>cv. Columbia</strain>
    </source>
</reference>
<reference key="2">
    <citation type="journal article" date="2000" name="Nature">
        <title>Sequence and analysis of chromosome 3 of the plant Arabidopsis thaliana.</title>
        <authorList>
            <person name="Salanoubat M."/>
            <person name="Lemcke K."/>
            <person name="Rieger M."/>
            <person name="Ansorge W."/>
            <person name="Unseld M."/>
            <person name="Fartmann B."/>
            <person name="Valle G."/>
            <person name="Bloecker H."/>
            <person name="Perez-Alonso M."/>
            <person name="Obermaier B."/>
            <person name="Delseny M."/>
            <person name="Boutry M."/>
            <person name="Grivell L.A."/>
            <person name="Mache R."/>
            <person name="Puigdomenech P."/>
            <person name="De Simone V."/>
            <person name="Choisne N."/>
            <person name="Artiguenave F."/>
            <person name="Robert C."/>
            <person name="Brottier P."/>
            <person name="Wincker P."/>
            <person name="Cattolico L."/>
            <person name="Weissenbach J."/>
            <person name="Saurin W."/>
            <person name="Quetier F."/>
            <person name="Schaefer M."/>
            <person name="Mueller-Auer S."/>
            <person name="Gabel C."/>
            <person name="Fuchs M."/>
            <person name="Benes V."/>
            <person name="Wurmbach E."/>
            <person name="Drzonek H."/>
            <person name="Erfle H."/>
            <person name="Jordan N."/>
            <person name="Bangert S."/>
            <person name="Wiedelmann R."/>
            <person name="Kranz H."/>
            <person name="Voss H."/>
            <person name="Holland R."/>
            <person name="Brandt P."/>
            <person name="Nyakatura G."/>
            <person name="Vezzi A."/>
            <person name="D'Angelo M."/>
            <person name="Pallavicini A."/>
            <person name="Toppo S."/>
            <person name="Simionati B."/>
            <person name="Conrad A."/>
            <person name="Hornischer K."/>
            <person name="Kauer G."/>
            <person name="Loehnert T.-H."/>
            <person name="Nordsiek G."/>
            <person name="Reichelt J."/>
            <person name="Scharfe M."/>
            <person name="Schoen O."/>
            <person name="Bargues M."/>
            <person name="Terol J."/>
            <person name="Climent J."/>
            <person name="Navarro P."/>
            <person name="Collado C."/>
            <person name="Perez-Perez A."/>
            <person name="Ottenwaelder B."/>
            <person name="Duchemin D."/>
            <person name="Cooke R."/>
            <person name="Laudie M."/>
            <person name="Berger-Llauro C."/>
            <person name="Purnelle B."/>
            <person name="Masuy D."/>
            <person name="de Haan M."/>
            <person name="Maarse A.C."/>
            <person name="Alcaraz J.-P."/>
            <person name="Cottet A."/>
            <person name="Casacuberta E."/>
            <person name="Monfort A."/>
            <person name="Argiriou A."/>
            <person name="Flores M."/>
            <person name="Liguori R."/>
            <person name="Vitale D."/>
            <person name="Mannhaupt G."/>
            <person name="Haase D."/>
            <person name="Schoof H."/>
            <person name="Rudd S."/>
            <person name="Zaccaria P."/>
            <person name="Mewes H.-W."/>
            <person name="Mayer K.F.X."/>
            <person name="Kaul S."/>
            <person name="Town C.D."/>
            <person name="Koo H.L."/>
            <person name="Tallon L.J."/>
            <person name="Jenkins J."/>
            <person name="Rooney T."/>
            <person name="Rizzo M."/>
            <person name="Walts A."/>
            <person name="Utterback T."/>
            <person name="Fujii C.Y."/>
            <person name="Shea T.P."/>
            <person name="Creasy T.H."/>
            <person name="Haas B."/>
            <person name="Maiti R."/>
            <person name="Wu D."/>
            <person name="Peterson J."/>
            <person name="Van Aken S."/>
            <person name="Pai G."/>
            <person name="Militscher J."/>
            <person name="Sellers P."/>
            <person name="Gill J.E."/>
            <person name="Feldblyum T.V."/>
            <person name="Preuss D."/>
            <person name="Lin X."/>
            <person name="Nierman W.C."/>
            <person name="Salzberg S.L."/>
            <person name="White O."/>
            <person name="Venter J.C."/>
            <person name="Fraser C.M."/>
            <person name="Kaneko T."/>
            <person name="Nakamura Y."/>
            <person name="Sato S."/>
            <person name="Kato T."/>
            <person name="Asamizu E."/>
            <person name="Sasamoto S."/>
            <person name="Kimura T."/>
            <person name="Idesawa K."/>
            <person name="Kawashima K."/>
            <person name="Kishida Y."/>
            <person name="Kiyokawa C."/>
            <person name="Kohara M."/>
            <person name="Matsumoto M."/>
            <person name="Matsuno A."/>
            <person name="Muraki A."/>
            <person name="Nakayama S."/>
            <person name="Nakazaki N."/>
            <person name="Shinpo S."/>
            <person name="Takeuchi C."/>
            <person name="Wada T."/>
            <person name="Watanabe A."/>
            <person name="Yamada M."/>
            <person name="Yasuda M."/>
            <person name="Tabata S."/>
        </authorList>
    </citation>
    <scope>NUCLEOTIDE SEQUENCE [LARGE SCALE GENOMIC DNA]</scope>
    <source>
        <strain>cv. Columbia</strain>
    </source>
</reference>
<reference key="3">
    <citation type="journal article" date="2017" name="Plant J.">
        <title>Araport11: a complete reannotation of the Arabidopsis thaliana reference genome.</title>
        <authorList>
            <person name="Cheng C.Y."/>
            <person name="Krishnakumar V."/>
            <person name="Chan A.P."/>
            <person name="Thibaud-Nissen F."/>
            <person name="Schobel S."/>
            <person name="Town C.D."/>
        </authorList>
    </citation>
    <scope>GENOME REANNOTATION</scope>
    <source>
        <strain>cv. Columbia</strain>
    </source>
</reference>
<reference key="4">
    <citation type="journal article" date="2006" name="Plant Biotechnol. J.">
        <title>Simultaneous high-throughput recombinational cloning of open reading frames in closed and open configurations.</title>
        <authorList>
            <person name="Underwood B.A."/>
            <person name="Vanderhaeghen R."/>
            <person name="Whitford R."/>
            <person name="Town C.D."/>
            <person name="Hilson P."/>
        </authorList>
    </citation>
    <scope>NUCLEOTIDE SEQUENCE [LARGE SCALE MRNA]</scope>
    <source>
        <strain>cv. Columbia</strain>
    </source>
</reference>
<reference key="5">
    <citation type="journal article" date="2007" name="Plant Mol. Biol.">
        <title>Functional analysis of Arabidopsis genes involved in mitochondrial iron-sulfur cluster assembly.</title>
        <authorList>
            <person name="Frazzon A.P.G."/>
            <person name="Ramirez M.V."/>
            <person name="Warek U."/>
            <person name="Balk J."/>
            <person name="Frazzon J."/>
            <person name="Dean D.R."/>
            <person name="Winkel B.S.J."/>
        </authorList>
    </citation>
    <scope>FUNCTION</scope>
    <scope>TISSUE SPECIFICITY</scope>
    <scope>SUBCELLULAR LOCATION</scope>
    <source>
        <strain>cv. Columbia</strain>
    </source>
</reference>
<sequence length="163" mass="17745">MMMLRQTSRKAYLGLQASPLGLGRRLYHENVIDHFENPRNVGSFNRNDPNVGTGLVGAPACGDLMSLQIKVDDSGQIIDTRFKTFGCGSAIASSSVASEWIKGKTLDEVMTIKNAEIAKHLRLPPVKLHCSMLAEDAIKSAVRDYKEKQAKTNAAAAEETVKA</sequence>
<gene>
    <name type="primary">ISU2</name>
    <name type="ordered locus">At3g01020</name>
    <name type="ORF">T4P13.30</name>
</gene>
<proteinExistence type="evidence at transcript level"/>
<protein>
    <recommendedName>
        <fullName>Iron-sulfur cluster assembly protein 2</fullName>
        <shortName>AtISU2</shortName>
        <shortName>Protein ISCU-LIKE 2</shortName>
    </recommendedName>
    <alternativeName>
        <fullName>NifU-like N-terminal domain-containing protein ISU2</fullName>
    </alternativeName>
    <alternativeName>
        <fullName>NifU-like protein ISU2</fullName>
    </alternativeName>
</protein>
<organism>
    <name type="scientific">Arabidopsis thaliana</name>
    <name type="common">Mouse-ear cress</name>
    <dbReference type="NCBI Taxonomy" id="3702"/>
    <lineage>
        <taxon>Eukaryota</taxon>
        <taxon>Viridiplantae</taxon>
        <taxon>Streptophyta</taxon>
        <taxon>Embryophyta</taxon>
        <taxon>Tracheophyta</taxon>
        <taxon>Spermatophyta</taxon>
        <taxon>Magnoliopsida</taxon>
        <taxon>eudicotyledons</taxon>
        <taxon>Gunneridae</taxon>
        <taxon>Pentapetalae</taxon>
        <taxon>rosids</taxon>
        <taxon>malvids</taxon>
        <taxon>Brassicales</taxon>
        <taxon>Brassicaceae</taxon>
        <taxon>Camelineae</taxon>
        <taxon>Arabidopsis</taxon>
    </lineage>
</organism>
<name>ISU2_ARATH</name>